<feature type="chain" id="PRO_0000293260" description="Small ribosomal subunit protein uS4">
    <location>
        <begin position="1"/>
        <end position="207"/>
    </location>
</feature>
<feature type="domain" description="S4 RNA-binding" evidence="1">
    <location>
        <begin position="98"/>
        <end position="164"/>
    </location>
</feature>
<accession>Q18CI6</accession>
<name>RS4_CLOD6</name>
<evidence type="ECO:0000255" key="1">
    <source>
        <dbReference type="HAMAP-Rule" id="MF_01306"/>
    </source>
</evidence>
<evidence type="ECO:0000305" key="2"/>
<protein>
    <recommendedName>
        <fullName evidence="1">Small ribosomal subunit protein uS4</fullName>
    </recommendedName>
    <alternativeName>
        <fullName evidence="2">30S ribosomal protein S4</fullName>
    </alternativeName>
</protein>
<sequence length="207" mass="23566">MARYTGASCRQCRREGMKLFLKGDRCYTDKCAIVKRNYAPGQHGQGRKKVSNYGLQLREKQKVKRIYGVLETQFRNLYERAENMPGKAGENLLSLLERRLDNVVYRMGLASSRKEARQLVTHGHFTLNGNKVDIPSLIVKVGDVIEVKEKSRSSAKFKNLVEVNSRIAPKWLEANVEGMTAKVVGVPTREDIDLEIAEHLIIELYSK</sequence>
<gene>
    <name evidence="1" type="primary">rpsD</name>
    <name type="ordered locus">CD630_00970</name>
</gene>
<organism>
    <name type="scientific">Clostridioides difficile (strain 630)</name>
    <name type="common">Peptoclostridium difficile</name>
    <dbReference type="NCBI Taxonomy" id="272563"/>
    <lineage>
        <taxon>Bacteria</taxon>
        <taxon>Bacillati</taxon>
        <taxon>Bacillota</taxon>
        <taxon>Clostridia</taxon>
        <taxon>Peptostreptococcales</taxon>
        <taxon>Peptostreptococcaceae</taxon>
        <taxon>Clostridioides</taxon>
    </lineage>
</organism>
<dbReference type="EMBL" id="AM180355">
    <property type="protein sequence ID" value="CAJ66916.1"/>
    <property type="molecule type" value="Genomic_DNA"/>
</dbReference>
<dbReference type="RefSeq" id="WP_003421121.1">
    <property type="nucleotide sequence ID" value="NZ_JAUPES010000043.1"/>
</dbReference>
<dbReference type="RefSeq" id="YP_001086565.1">
    <property type="nucleotide sequence ID" value="NC_009089.1"/>
</dbReference>
<dbReference type="SMR" id="Q18CI6"/>
<dbReference type="STRING" id="272563.CD630_00970"/>
<dbReference type="EnsemblBacteria" id="CAJ66916">
    <property type="protein sequence ID" value="CAJ66916"/>
    <property type="gene ID" value="CD630_00970"/>
</dbReference>
<dbReference type="GeneID" id="66352599"/>
<dbReference type="KEGG" id="cdf:CD630_00970"/>
<dbReference type="KEGG" id="pdc:CDIF630_00167"/>
<dbReference type="PATRIC" id="fig|272563.120.peg.107"/>
<dbReference type="eggNOG" id="COG0522">
    <property type="taxonomic scope" value="Bacteria"/>
</dbReference>
<dbReference type="OrthoDB" id="9803672at2"/>
<dbReference type="PhylomeDB" id="Q18CI6"/>
<dbReference type="BioCyc" id="PDIF272563:G12WB-155-MONOMER"/>
<dbReference type="Proteomes" id="UP000001978">
    <property type="component" value="Chromosome"/>
</dbReference>
<dbReference type="GO" id="GO:0015935">
    <property type="term" value="C:small ribosomal subunit"/>
    <property type="evidence" value="ECO:0007669"/>
    <property type="project" value="InterPro"/>
</dbReference>
<dbReference type="GO" id="GO:0019843">
    <property type="term" value="F:rRNA binding"/>
    <property type="evidence" value="ECO:0007669"/>
    <property type="project" value="UniProtKB-UniRule"/>
</dbReference>
<dbReference type="GO" id="GO:0003735">
    <property type="term" value="F:structural constituent of ribosome"/>
    <property type="evidence" value="ECO:0007669"/>
    <property type="project" value="InterPro"/>
</dbReference>
<dbReference type="GO" id="GO:0042274">
    <property type="term" value="P:ribosomal small subunit biogenesis"/>
    <property type="evidence" value="ECO:0007669"/>
    <property type="project" value="TreeGrafter"/>
</dbReference>
<dbReference type="GO" id="GO:0006412">
    <property type="term" value="P:translation"/>
    <property type="evidence" value="ECO:0007669"/>
    <property type="project" value="UniProtKB-UniRule"/>
</dbReference>
<dbReference type="CDD" id="cd00165">
    <property type="entry name" value="S4"/>
    <property type="match status" value="1"/>
</dbReference>
<dbReference type="FunFam" id="1.10.1050.10:FF:000001">
    <property type="entry name" value="30S ribosomal protein S4"/>
    <property type="match status" value="1"/>
</dbReference>
<dbReference type="FunFam" id="3.10.290.10:FF:000001">
    <property type="entry name" value="30S ribosomal protein S4"/>
    <property type="match status" value="1"/>
</dbReference>
<dbReference type="Gene3D" id="1.10.1050.10">
    <property type="entry name" value="Ribosomal Protein S4 Delta 41, Chain A, domain 1"/>
    <property type="match status" value="1"/>
</dbReference>
<dbReference type="Gene3D" id="3.10.290.10">
    <property type="entry name" value="RNA-binding S4 domain"/>
    <property type="match status" value="1"/>
</dbReference>
<dbReference type="HAMAP" id="MF_01306_B">
    <property type="entry name" value="Ribosomal_uS4_B"/>
    <property type="match status" value="1"/>
</dbReference>
<dbReference type="InterPro" id="IPR022801">
    <property type="entry name" value="Ribosomal_uS4"/>
</dbReference>
<dbReference type="InterPro" id="IPR005709">
    <property type="entry name" value="Ribosomal_uS4_bac-type"/>
</dbReference>
<dbReference type="InterPro" id="IPR018079">
    <property type="entry name" value="Ribosomal_uS4_CS"/>
</dbReference>
<dbReference type="InterPro" id="IPR001912">
    <property type="entry name" value="Ribosomal_uS4_N"/>
</dbReference>
<dbReference type="InterPro" id="IPR002942">
    <property type="entry name" value="S4_RNA-bd"/>
</dbReference>
<dbReference type="InterPro" id="IPR036986">
    <property type="entry name" value="S4_RNA-bd_sf"/>
</dbReference>
<dbReference type="NCBIfam" id="NF003717">
    <property type="entry name" value="PRK05327.1"/>
    <property type="match status" value="1"/>
</dbReference>
<dbReference type="NCBIfam" id="TIGR01017">
    <property type="entry name" value="rpsD_bact"/>
    <property type="match status" value="1"/>
</dbReference>
<dbReference type="PANTHER" id="PTHR11831">
    <property type="entry name" value="30S 40S RIBOSOMAL PROTEIN"/>
    <property type="match status" value="1"/>
</dbReference>
<dbReference type="PANTHER" id="PTHR11831:SF4">
    <property type="entry name" value="SMALL RIBOSOMAL SUBUNIT PROTEIN US4M"/>
    <property type="match status" value="1"/>
</dbReference>
<dbReference type="Pfam" id="PF00163">
    <property type="entry name" value="Ribosomal_S4"/>
    <property type="match status" value="1"/>
</dbReference>
<dbReference type="Pfam" id="PF01479">
    <property type="entry name" value="S4"/>
    <property type="match status" value="1"/>
</dbReference>
<dbReference type="SMART" id="SM01390">
    <property type="entry name" value="Ribosomal_S4"/>
    <property type="match status" value="1"/>
</dbReference>
<dbReference type="SMART" id="SM00363">
    <property type="entry name" value="S4"/>
    <property type="match status" value="1"/>
</dbReference>
<dbReference type="SUPFAM" id="SSF55174">
    <property type="entry name" value="Alpha-L RNA-binding motif"/>
    <property type="match status" value="1"/>
</dbReference>
<dbReference type="PROSITE" id="PS00632">
    <property type="entry name" value="RIBOSOMAL_S4"/>
    <property type="match status" value="1"/>
</dbReference>
<dbReference type="PROSITE" id="PS50889">
    <property type="entry name" value="S4"/>
    <property type="match status" value="1"/>
</dbReference>
<keyword id="KW-1185">Reference proteome</keyword>
<keyword id="KW-0687">Ribonucleoprotein</keyword>
<keyword id="KW-0689">Ribosomal protein</keyword>
<keyword id="KW-0694">RNA-binding</keyword>
<keyword id="KW-0699">rRNA-binding</keyword>
<comment type="function">
    <text evidence="1">One of the primary rRNA binding proteins, it binds directly to 16S rRNA where it nucleates assembly of the body of the 30S subunit.</text>
</comment>
<comment type="function">
    <text evidence="1">With S5 and S12 plays an important role in translational accuracy.</text>
</comment>
<comment type="subunit">
    <text evidence="1">Part of the 30S ribosomal subunit. Contacts protein S5. The interaction surface between S4 and S5 is involved in control of translational fidelity.</text>
</comment>
<comment type="similarity">
    <text evidence="1">Belongs to the universal ribosomal protein uS4 family.</text>
</comment>
<proteinExistence type="inferred from homology"/>
<reference key="1">
    <citation type="journal article" date="2006" name="Nat. Genet.">
        <title>The multidrug-resistant human pathogen Clostridium difficile has a highly mobile, mosaic genome.</title>
        <authorList>
            <person name="Sebaihia M."/>
            <person name="Wren B.W."/>
            <person name="Mullany P."/>
            <person name="Fairweather N.F."/>
            <person name="Minton N."/>
            <person name="Stabler R."/>
            <person name="Thomson N.R."/>
            <person name="Roberts A.P."/>
            <person name="Cerdeno-Tarraga A.M."/>
            <person name="Wang H."/>
            <person name="Holden M.T.G."/>
            <person name="Wright A."/>
            <person name="Churcher C."/>
            <person name="Quail M.A."/>
            <person name="Baker S."/>
            <person name="Bason N."/>
            <person name="Brooks K."/>
            <person name="Chillingworth T."/>
            <person name="Cronin A."/>
            <person name="Davis P."/>
            <person name="Dowd L."/>
            <person name="Fraser A."/>
            <person name="Feltwell T."/>
            <person name="Hance Z."/>
            <person name="Holroyd S."/>
            <person name="Jagels K."/>
            <person name="Moule S."/>
            <person name="Mungall K."/>
            <person name="Price C."/>
            <person name="Rabbinowitsch E."/>
            <person name="Sharp S."/>
            <person name="Simmonds M."/>
            <person name="Stevens K."/>
            <person name="Unwin L."/>
            <person name="Whithead S."/>
            <person name="Dupuy B."/>
            <person name="Dougan G."/>
            <person name="Barrell B."/>
            <person name="Parkhill J."/>
        </authorList>
    </citation>
    <scope>NUCLEOTIDE SEQUENCE [LARGE SCALE GENOMIC DNA]</scope>
    <source>
        <strain>630</strain>
    </source>
</reference>